<evidence type="ECO:0000250" key="1">
    <source>
        <dbReference type="UniProtKB" id="P13716"/>
    </source>
</evidence>
<evidence type="ECO:0000269" key="2">
    <source>
    </source>
</evidence>
<evidence type="ECO:0000305" key="3"/>
<evidence type="ECO:0007744" key="4">
    <source>
    </source>
</evidence>
<evidence type="ECO:0007744" key="5">
    <source>
    </source>
</evidence>
<evidence type="ECO:0007744" key="6">
    <source>
    </source>
</evidence>
<evidence type="ECO:0007829" key="7">
    <source>
        <dbReference type="PDB" id="2Z0I"/>
    </source>
</evidence>
<evidence type="ECO:0007829" key="8">
    <source>
        <dbReference type="PDB" id="2Z1B"/>
    </source>
</evidence>
<keyword id="KW-0002">3D-structure</keyword>
<keyword id="KW-0021">Allosteric enzyme</keyword>
<keyword id="KW-0963">Cytoplasm</keyword>
<keyword id="KW-0350">Heme biosynthesis</keyword>
<keyword id="KW-0456">Lyase</keyword>
<keyword id="KW-0479">Metal-binding</keyword>
<keyword id="KW-0597">Phosphoprotein</keyword>
<keyword id="KW-0627">Porphyrin biosynthesis</keyword>
<keyword id="KW-1185">Reference proteome</keyword>
<keyword id="KW-0862">Zinc</keyword>
<accession>P10518</accession>
<accession>Q3THV6</accession>
<sequence length="330" mass="36024">MHHQSVLHSGYFHPLLRSWQTAASTVSASNLIYPIFVTDVPDDVQPIASLPGVARYGVNQLEEMLRPLVEAGLRCVLIFGVPSRVPKDEQGSAADSEDSPTIEAVRLLRKTFPSLLVACDVCLCPYTSHGHCGLLSENGAFLAEESRQRLAEVALAYAKAGCQVVAPSDMMDGRVEAIKAALLKHGLGNRVSVMSYSAKFASCFYGPFRDAAQSSPAFGDRRCYQLPPGARGLALRAVARDIQEGADMLMVKPGLPYLDMVREVKDKHPELPLAVYQVSGEFAMLWHGAQAGAFDLRTAVLETMTAFRRAGADIIITYFAPQLLKWLKEE</sequence>
<name>HEM2_MOUSE</name>
<proteinExistence type="evidence at protein level"/>
<feature type="chain" id="PRO_0000140528" description="Delta-aminolevulinic acid dehydratase">
    <location>
        <begin position="1"/>
        <end position="330"/>
    </location>
</feature>
<feature type="active site" description="Schiff-base intermediate with substrate" evidence="1">
    <location>
        <position position="199"/>
    </location>
</feature>
<feature type="active site" description="Schiff-base intermediate with substrate" evidence="1">
    <location>
        <position position="252"/>
    </location>
</feature>
<feature type="binding site" evidence="1">
    <location>
        <position position="122"/>
    </location>
    <ligand>
        <name>Zn(2+)</name>
        <dbReference type="ChEBI" id="CHEBI:29105"/>
        <label>1</label>
        <note>catalytic</note>
    </ligand>
</feature>
<feature type="binding site" evidence="1">
    <location>
        <position position="124"/>
    </location>
    <ligand>
        <name>Zn(2+)</name>
        <dbReference type="ChEBI" id="CHEBI:29105"/>
        <label>1</label>
        <note>catalytic</note>
    </ligand>
</feature>
<feature type="binding site" evidence="1">
    <location>
        <position position="131"/>
    </location>
    <ligand>
        <name>Zn(2+)</name>
        <dbReference type="ChEBI" id="CHEBI:29105"/>
        <label>2</label>
    </ligand>
</feature>
<feature type="binding site" evidence="1">
    <location>
        <position position="132"/>
    </location>
    <ligand>
        <name>Zn(2+)</name>
        <dbReference type="ChEBI" id="CHEBI:29105"/>
        <label>1</label>
        <note>catalytic</note>
    </ligand>
</feature>
<feature type="binding site" evidence="1">
    <location>
        <position position="209"/>
    </location>
    <ligand>
        <name>5-aminolevulinate</name>
        <dbReference type="ChEBI" id="CHEBI:356416"/>
        <label>1</label>
    </ligand>
</feature>
<feature type="binding site" evidence="1">
    <location>
        <position position="221"/>
    </location>
    <ligand>
        <name>5-aminolevulinate</name>
        <dbReference type="ChEBI" id="CHEBI:356416"/>
        <label>1</label>
    </ligand>
</feature>
<feature type="binding site" evidence="1">
    <location>
        <position position="223"/>
    </location>
    <ligand>
        <name>Zn(2+)</name>
        <dbReference type="ChEBI" id="CHEBI:29105"/>
        <label>2</label>
    </ligand>
</feature>
<feature type="binding site" evidence="1">
    <location>
        <position position="279"/>
    </location>
    <ligand>
        <name>5-aminolevulinate</name>
        <dbReference type="ChEBI" id="CHEBI:356416"/>
        <label>2</label>
    </ligand>
</feature>
<feature type="binding site" evidence="1">
    <location>
        <position position="318"/>
    </location>
    <ligand>
        <name>5-aminolevulinate</name>
        <dbReference type="ChEBI" id="CHEBI:356416"/>
        <label>2</label>
    </ligand>
</feature>
<feature type="modified residue" description="N6-succinyllysine" evidence="6">
    <location>
        <position position="199"/>
    </location>
</feature>
<feature type="modified residue" description="Phosphoserine" evidence="4 5">
    <location>
        <position position="215"/>
    </location>
</feature>
<feature type="modified residue" description="N6-succinyllysine" evidence="6">
    <location>
        <position position="252"/>
    </location>
</feature>
<feature type="helix" evidence="7">
    <location>
        <begin position="8"/>
        <end position="10"/>
    </location>
</feature>
<feature type="helix" evidence="7">
    <location>
        <begin position="14"/>
        <end position="20"/>
    </location>
</feature>
<feature type="helix" evidence="7">
    <location>
        <begin position="28"/>
        <end position="30"/>
    </location>
</feature>
<feature type="strand" evidence="7">
    <location>
        <begin position="31"/>
        <end position="42"/>
    </location>
</feature>
<feature type="strand" evidence="7">
    <location>
        <begin position="44"/>
        <end position="46"/>
    </location>
</feature>
<feature type="strand" evidence="8">
    <location>
        <begin position="48"/>
        <end position="50"/>
    </location>
</feature>
<feature type="strand" evidence="7">
    <location>
        <begin position="54"/>
        <end position="57"/>
    </location>
</feature>
<feature type="helix" evidence="7">
    <location>
        <begin position="58"/>
        <end position="60"/>
    </location>
</feature>
<feature type="helix" evidence="7">
    <location>
        <begin position="61"/>
        <end position="64"/>
    </location>
</feature>
<feature type="helix" evidence="7">
    <location>
        <begin position="66"/>
        <end position="69"/>
    </location>
</feature>
<feature type="turn" evidence="7">
    <location>
        <begin position="70"/>
        <end position="72"/>
    </location>
</feature>
<feature type="strand" evidence="7">
    <location>
        <begin position="75"/>
        <end position="81"/>
    </location>
</feature>
<feature type="helix" evidence="7">
    <location>
        <begin position="100"/>
        <end position="111"/>
    </location>
</feature>
<feature type="strand" evidence="7">
    <location>
        <begin position="113"/>
        <end position="119"/>
    </location>
</feature>
<feature type="strand" evidence="8">
    <location>
        <begin position="133"/>
        <end position="135"/>
    </location>
</feature>
<feature type="helix" evidence="7">
    <location>
        <begin position="144"/>
        <end position="160"/>
    </location>
</feature>
<feature type="strand" evidence="7">
    <location>
        <begin position="163"/>
        <end position="165"/>
    </location>
</feature>
<feature type="helix" evidence="7">
    <location>
        <begin position="174"/>
        <end position="183"/>
    </location>
</feature>
<feature type="turn" evidence="8">
    <location>
        <begin position="185"/>
        <end position="188"/>
    </location>
</feature>
<feature type="strand" evidence="7">
    <location>
        <begin position="192"/>
        <end position="194"/>
    </location>
</feature>
<feature type="helix" evidence="7">
    <location>
        <begin position="206"/>
        <end position="211"/>
    </location>
</feature>
<feature type="helix" evidence="7">
    <location>
        <begin position="231"/>
        <end position="241"/>
    </location>
</feature>
<feature type="helix" evidence="7">
    <location>
        <begin position="242"/>
        <end position="244"/>
    </location>
</feature>
<feature type="strand" evidence="7">
    <location>
        <begin position="247"/>
        <end position="254"/>
    </location>
</feature>
<feature type="helix" evidence="7">
    <location>
        <begin position="255"/>
        <end position="257"/>
    </location>
</feature>
<feature type="helix" evidence="7">
    <location>
        <begin position="258"/>
        <end position="267"/>
    </location>
</feature>
<feature type="strand" evidence="7">
    <location>
        <begin position="273"/>
        <end position="276"/>
    </location>
</feature>
<feature type="helix" evidence="7">
    <location>
        <begin position="279"/>
        <end position="290"/>
    </location>
</feature>
<feature type="helix" evidence="7">
    <location>
        <begin position="296"/>
        <end position="309"/>
    </location>
</feature>
<feature type="strand" evidence="7">
    <location>
        <begin position="313"/>
        <end position="316"/>
    </location>
</feature>
<feature type="helix" evidence="7">
    <location>
        <begin position="320"/>
        <end position="326"/>
    </location>
</feature>
<protein>
    <recommendedName>
        <fullName>Delta-aminolevulinic acid dehydratase</fullName>
        <shortName>ALADH</shortName>
        <ecNumber>4.2.1.24</ecNumber>
    </recommendedName>
    <alternativeName>
        <fullName>Porphobilinogen synthase</fullName>
    </alternativeName>
</protein>
<comment type="function">
    <text evidence="2">Catalyzes an early step in the biosynthesis of tetrapyrroles. Binds two molecules of 5-aminolevulinate per subunit, each at a distinct site, and catalyzes their condensation to form porphobilinogen.</text>
</comment>
<comment type="catalytic activity">
    <reaction evidence="1">
        <text>2 5-aminolevulinate = porphobilinogen + 2 H2O + H(+)</text>
        <dbReference type="Rhea" id="RHEA:24064"/>
        <dbReference type="ChEBI" id="CHEBI:15377"/>
        <dbReference type="ChEBI" id="CHEBI:15378"/>
        <dbReference type="ChEBI" id="CHEBI:58126"/>
        <dbReference type="ChEBI" id="CHEBI:356416"/>
        <dbReference type="EC" id="4.2.1.24"/>
    </reaction>
</comment>
<comment type="cofactor">
    <cofactor evidence="1">
        <name>Zn(2+)</name>
        <dbReference type="ChEBI" id="CHEBI:29105"/>
    </cofactor>
    <text evidence="1">Binds 8 zinc ions per octamer. Requires four zinc ions per octamer for full catalytic activity. Can bind up to 2 zinc ions per subunit.</text>
</comment>
<comment type="activity regulation">
    <text evidence="1">Can alternate between a fully active homooctamer and a low-activity homohexamer. A bound magnesium ion may promote the assembly of the fully active homooctamer. The magnesium-binding site is absent in the low-activity homohexamer. Inhibited by compounds that favor the hexameric state. Inhibited by divalent lead ions. The lead ions partially displace the zinc cofactor.</text>
</comment>
<comment type="pathway">
    <text evidence="1">Porphyrin-containing compound metabolism; protoporphyrin-IX biosynthesis; coproporphyrinogen-III from 5-aminolevulinate: step 1/4.</text>
</comment>
<comment type="subunit">
    <text evidence="1">Homooctamer; active form. Homohexamer; low activity form.</text>
</comment>
<comment type="subcellular location">
    <subcellularLocation>
        <location evidence="2">Cytoplasm</location>
        <location evidence="2">Cytosol</location>
    </subcellularLocation>
</comment>
<comment type="similarity">
    <text evidence="3">Belongs to the ALAD family.</text>
</comment>
<reference key="1">
    <citation type="journal article" date="1989" name="Nucleic Acids Res.">
        <title>Cloning and sequence of mouse erythroid delta-aminolevulinate dehydratase cDNA.</title>
        <authorList>
            <person name="Bishop T.R."/>
            <person name="Hodes Z.I."/>
            <person name="Frelin L.P."/>
            <person name="Boyer S.H."/>
        </authorList>
    </citation>
    <scope>NUCLEOTIDE SEQUENCE [MRNA]</scope>
    <source>
        <strain>BALB/cJ</strain>
    </source>
</reference>
<reference key="2">
    <citation type="journal article" date="2005" name="Science">
        <title>The transcriptional landscape of the mammalian genome.</title>
        <authorList>
            <person name="Carninci P."/>
            <person name="Kasukawa T."/>
            <person name="Katayama S."/>
            <person name="Gough J."/>
            <person name="Frith M.C."/>
            <person name="Maeda N."/>
            <person name="Oyama R."/>
            <person name="Ravasi T."/>
            <person name="Lenhard B."/>
            <person name="Wells C."/>
            <person name="Kodzius R."/>
            <person name="Shimokawa K."/>
            <person name="Bajic V.B."/>
            <person name="Brenner S.E."/>
            <person name="Batalov S."/>
            <person name="Forrest A.R."/>
            <person name="Zavolan M."/>
            <person name="Davis M.J."/>
            <person name="Wilming L.G."/>
            <person name="Aidinis V."/>
            <person name="Allen J.E."/>
            <person name="Ambesi-Impiombato A."/>
            <person name="Apweiler R."/>
            <person name="Aturaliya R.N."/>
            <person name="Bailey T.L."/>
            <person name="Bansal M."/>
            <person name="Baxter L."/>
            <person name="Beisel K.W."/>
            <person name="Bersano T."/>
            <person name="Bono H."/>
            <person name="Chalk A.M."/>
            <person name="Chiu K.P."/>
            <person name="Choudhary V."/>
            <person name="Christoffels A."/>
            <person name="Clutterbuck D.R."/>
            <person name="Crowe M.L."/>
            <person name="Dalla E."/>
            <person name="Dalrymple B.P."/>
            <person name="de Bono B."/>
            <person name="Della Gatta G."/>
            <person name="di Bernardo D."/>
            <person name="Down T."/>
            <person name="Engstrom P."/>
            <person name="Fagiolini M."/>
            <person name="Faulkner G."/>
            <person name="Fletcher C.F."/>
            <person name="Fukushima T."/>
            <person name="Furuno M."/>
            <person name="Futaki S."/>
            <person name="Gariboldi M."/>
            <person name="Georgii-Hemming P."/>
            <person name="Gingeras T.R."/>
            <person name="Gojobori T."/>
            <person name="Green R.E."/>
            <person name="Gustincich S."/>
            <person name="Harbers M."/>
            <person name="Hayashi Y."/>
            <person name="Hensch T.K."/>
            <person name="Hirokawa N."/>
            <person name="Hill D."/>
            <person name="Huminiecki L."/>
            <person name="Iacono M."/>
            <person name="Ikeo K."/>
            <person name="Iwama A."/>
            <person name="Ishikawa T."/>
            <person name="Jakt M."/>
            <person name="Kanapin A."/>
            <person name="Katoh M."/>
            <person name="Kawasawa Y."/>
            <person name="Kelso J."/>
            <person name="Kitamura H."/>
            <person name="Kitano H."/>
            <person name="Kollias G."/>
            <person name="Krishnan S.P."/>
            <person name="Kruger A."/>
            <person name="Kummerfeld S.K."/>
            <person name="Kurochkin I.V."/>
            <person name="Lareau L.F."/>
            <person name="Lazarevic D."/>
            <person name="Lipovich L."/>
            <person name="Liu J."/>
            <person name="Liuni S."/>
            <person name="McWilliam S."/>
            <person name="Madan Babu M."/>
            <person name="Madera M."/>
            <person name="Marchionni L."/>
            <person name="Matsuda H."/>
            <person name="Matsuzawa S."/>
            <person name="Miki H."/>
            <person name="Mignone F."/>
            <person name="Miyake S."/>
            <person name="Morris K."/>
            <person name="Mottagui-Tabar S."/>
            <person name="Mulder N."/>
            <person name="Nakano N."/>
            <person name="Nakauchi H."/>
            <person name="Ng P."/>
            <person name="Nilsson R."/>
            <person name="Nishiguchi S."/>
            <person name="Nishikawa S."/>
            <person name="Nori F."/>
            <person name="Ohara O."/>
            <person name="Okazaki Y."/>
            <person name="Orlando V."/>
            <person name="Pang K.C."/>
            <person name="Pavan W.J."/>
            <person name="Pavesi G."/>
            <person name="Pesole G."/>
            <person name="Petrovsky N."/>
            <person name="Piazza S."/>
            <person name="Reed J."/>
            <person name="Reid J.F."/>
            <person name="Ring B.Z."/>
            <person name="Ringwald M."/>
            <person name="Rost B."/>
            <person name="Ruan Y."/>
            <person name="Salzberg S.L."/>
            <person name="Sandelin A."/>
            <person name="Schneider C."/>
            <person name="Schoenbach C."/>
            <person name="Sekiguchi K."/>
            <person name="Semple C.A."/>
            <person name="Seno S."/>
            <person name="Sessa L."/>
            <person name="Sheng Y."/>
            <person name="Shibata Y."/>
            <person name="Shimada H."/>
            <person name="Shimada K."/>
            <person name="Silva D."/>
            <person name="Sinclair B."/>
            <person name="Sperling S."/>
            <person name="Stupka E."/>
            <person name="Sugiura K."/>
            <person name="Sultana R."/>
            <person name="Takenaka Y."/>
            <person name="Taki K."/>
            <person name="Tammoja K."/>
            <person name="Tan S.L."/>
            <person name="Tang S."/>
            <person name="Taylor M.S."/>
            <person name="Tegner J."/>
            <person name="Teichmann S.A."/>
            <person name="Ueda H.R."/>
            <person name="van Nimwegen E."/>
            <person name="Verardo R."/>
            <person name="Wei C.L."/>
            <person name="Yagi K."/>
            <person name="Yamanishi H."/>
            <person name="Zabarovsky E."/>
            <person name="Zhu S."/>
            <person name="Zimmer A."/>
            <person name="Hide W."/>
            <person name="Bult C."/>
            <person name="Grimmond S.M."/>
            <person name="Teasdale R.D."/>
            <person name="Liu E.T."/>
            <person name="Brusic V."/>
            <person name="Quackenbush J."/>
            <person name="Wahlestedt C."/>
            <person name="Mattick J.S."/>
            <person name="Hume D.A."/>
            <person name="Kai C."/>
            <person name="Sasaki D."/>
            <person name="Tomaru Y."/>
            <person name="Fukuda S."/>
            <person name="Kanamori-Katayama M."/>
            <person name="Suzuki M."/>
            <person name="Aoki J."/>
            <person name="Arakawa T."/>
            <person name="Iida J."/>
            <person name="Imamura K."/>
            <person name="Itoh M."/>
            <person name="Kato T."/>
            <person name="Kawaji H."/>
            <person name="Kawagashira N."/>
            <person name="Kawashima T."/>
            <person name="Kojima M."/>
            <person name="Kondo S."/>
            <person name="Konno H."/>
            <person name="Nakano K."/>
            <person name="Ninomiya N."/>
            <person name="Nishio T."/>
            <person name="Okada M."/>
            <person name="Plessy C."/>
            <person name="Shibata K."/>
            <person name="Shiraki T."/>
            <person name="Suzuki S."/>
            <person name="Tagami M."/>
            <person name="Waki K."/>
            <person name="Watahiki A."/>
            <person name="Okamura-Oho Y."/>
            <person name="Suzuki H."/>
            <person name="Kawai J."/>
            <person name="Hayashizaki Y."/>
        </authorList>
    </citation>
    <scope>NUCLEOTIDE SEQUENCE [LARGE SCALE MRNA]</scope>
    <source>
        <strain>BALB/cJ</strain>
        <strain>C57BL/6J</strain>
        <strain>DBA/2J</strain>
        <tissue>Placenta</tissue>
    </source>
</reference>
<reference key="3">
    <citation type="journal article" date="2004" name="Genome Res.">
        <title>The status, quality, and expansion of the NIH full-length cDNA project: the Mammalian Gene Collection (MGC).</title>
        <authorList>
            <consortium name="The MGC Project Team"/>
        </authorList>
    </citation>
    <scope>NUCLEOTIDE SEQUENCE [LARGE SCALE MRNA]</scope>
    <source>
        <strain>FVB/N</strain>
        <tissue>Colon</tissue>
    </source>
</reference>
<reference key="4">
    <citation type="journal article" date="1969" name="J. Biol. Chem.">
        <title>The genetic and developmental regulation of hepatic delta-aminolevulinate dehydratase in mice.</title>
        <authorList>
            <person name="Doyle D."/>
            <person name="Schimke R.T."/>
        </authorList>
    </citation>
    <scope>FUNCTION</scope>
    <scope>SUBCELLULAR LOCATION</scope>
</reference>
<reference key="5">
    <citation type="journal article" date="2007" name="Proc. Natl. Acad. Sci. U.S.A.">
        <title>Large-scale phosphorylation analysis of mouse liver.</title>
        <authorList>
            <person name="Villen J."/>
            <person name="Beausoleil S.A."/>
            <person name="Gerber S.A."/>
            <person name="Gygi S.P."/>
        </authorList>
    </citation>
    <scope>PHOSPHORYLATION [LARGE SCALE ANALYSIS] AT SER-215</scope>
    <scope>IDENTIFICATION BY MASS SPECTROMETRY [LARGE SCALE ANALYSIS]</scope>
    <source>
        <tissue>Liver</tissue>
    </source>
</reference>
<reference key="6">
    <citation type="journal article" date="2010" name="Cell">
        <title>A tissue-specific atlas of mouse protein phosphorylation and expression.</title>
        <authorList>
            <person name="Huttlin E.L."/>
            <person name="Jedrychowski M.P."/>
            <person name="Elias J.E."/>
            <person name="Goswami T."/>
            <person name="Rad R."/>
            <person name="Beausoleil S.A."/>
            <person name="Villen J."/>
            <person name="Haas W."/>
            <person name="Sowa M.E."/>
            <person name="Gygi S.P."/>
        </authorList>
    </citation>
    <scope>PHOSPHORYLATION [LARGE SCALE ANALYSIS] AT SER-215</scope>
    <scope>IDENTIFICATION BY MASS SPECTROMETRY [LARGE SCALE ANALYSIS]</scope>
    <source>
        <tissue>Brain</tissue>
        <tissue>Brown adipose tissue</tissue>
        <tissue>Heart</tissue>
        <tissue>Kidney</tissue>
        <tissue>Liver</tissue>
        <tissue>Lung</tissue>
        <tissue>Pancreas</tissue>
        <tissue>Spleen</tissue>
        <tissue>Testis</tissue>
    </source>
</reference>
<reference key="7">
    <citation type="journal article" date="2013" name="Mol. Cell">
        <title>SIRT5-mediated lysine desuccinylation impacts diverse metabolic pathways.</title>
        <authorList>
            <person name="Park J."/>
            <person name="Chen Y."/>
            <person name="Tishkoff D.X."/>
            <person name="Peng C."/>
            <person name="Tan M."/>
            <person name="Dai L."/>
            <person name="Xie Z."/>
            <person name="Zhang Y."/>
            <person name="Zwaans B.M."/>
            <person name="Skinner M.E."/>
            <person name="Lombard D.B."/>
            <person name="Zhao Y."/>
        </authorList>
    </citation>
    <scope>SUCCINYLATION [LARGE SCALE ANALYSIS] AT LYS-199 AND LYS-252</scope>
    <scope>IDENTIFICATION BY MASS SPECTROMETRY [LARGE SCALE ANALYSIS]</scope>
    <source>
        <tissue>Liver</tissue>
    </source>
</reference>
<reference key="8">
    <citation type="submission" date="2009-02" db="PDB data bank">
        <title>Crystal structure of 5-aminolevulinic acid dehydratase (ALAD) from Mus musculus.</title>
        <authorList>
            <consortium name="RIKEN structural genomics initiative (RSGI)"/>
        </authorList>
    </citation>
    <scope>X-RAY CRYSTALLOGRAPHY (3.2 ANGSTROMS)</scope>
</reference>
<dbReference type="EC" id="4.2.1.24"/>
<dbReference type="EMBL" id="X13752">
    <property type="protein sequence ID" value="CAA32015.1"/>
    <property type="molecule type" value="mRNA"/>
</dbReference>
<dbReference type="EMBL" id="AK032908">
    <property type="protein sequence ID" value="BAC28080.1"/>
    <property type="molecule type" value="mRNA"/>
</dbReference>
<dbReference type="EMBL" id="AK167673">
    <property type="protein sequence ID" value="BAE39722.1"/>
    <property type="molecule type" value="mRNA"/>
</dbReference>
<dbReference type="EMBL" id="AK168119">
    <property type="protein sequence ID" value="BAE40090.1"/>
    <property type="molecule type" value="mRNA"/>
</dbReference>
<dbReference type="EMBL" id="AK168132">
    <property type="protein sequence ID" value="BAE40101.1"/>
    <property type="molecule type" value="mRNA"/>
</dbReference>
<dbReference type="EMBL" id="BC055930">
    <property type="protein sequence ID" value="AAH55930.1"/>
    <property type="molecule type" value="mRNA"/>
</dbReference>
<dbReference type="CCDS" id="CCDS18243.1"/>
<dbReference type="PIR" id="S03187">
    <property type="entry name" value="S03187"/>
</dbReference>
<dbReference type="RefSeq" id="NP_001263375.1">
    <property type="nucleotide sequence ID" value="NM_001276446.3"/>
</dbReference>
<dbReference type="RefSeq" id="NP_001408060.1">
    <property type="nucleotide sequence ID" value="NM_001421131.1"/>
</dbReference>
<dbReference type="RefSeq" id="NP_032551.3">
    <property type="nucleotide sequence ID" value="NM_008525.4"/>
</dbReference>
<dbReference type="RefSeq" id="XP_006537702.1">
    <property type="nucleotide sequence ID" value="XM_006537639.2"/>
</dbReference>
<dbReference type="PDB" id="2Z0I">
    <property type="method" value="X-ray"/>
    <property type="resolution" value="3.20 A"/>
    <property type="chains" value="A/B=1-330"/>
</dbReference>
<dbReference type="PDB" id="2Z1B">
    <property type="method" value="X-ray"/>
    <property type="resolution" value="3.30 A"/>
    <property type="chains" value="A/B/C/D=1-330"/>
</dbReference>
<dbReference type="PDBsum" id="2Z0I"/>
<dbReference type="PDBsum" id="2Z1B"/>
<dbReference type="SMR" id="P10518"/>
<dbReference type="BioGRID" id="201229">
    <property type="interactions" value="15"/>
</dbReference>
<dbReference type="FunCoup" id="P10518">
    <property type="interactions" value="1285"/>
</dbReference>
<dbReference type="IntAct" id="P10518">
    <property type="interactions" value="2"/>
</dbReference>
<dbReference type="STRING" id="10090.ENSMUSP00000103068"/>
<dbReference type="iPTMnet" id="P10518"/>
<dbReference type="PhosphoSitePlus" id="P10518"/>
<dbReference type="SwissPalm" id="P10518"/>
<dbReference type="REPRODUCTION-2DPAGE" id="P10518"/>
<dbReference type="jPOST" id="P10518"/>
<dbReference type="PaxDb" id="10090-ENSMUSP00000030090"/>
<dbReference type="PeptideAtlas" id="P10518"/>
<dbReference type="ProteomicsDB" id="269694"/>
<dbReference type="Pumba" id="P10518"/>
<dbReference type="Antibodypedia" id="15306">
    <property type="antibodies" value="235 antibodies from 26 providers"/>
</dbReference>
<dbReference type="DNASU" id="17025"/>
<dbReference type="Ensembl" id="ENSMUST00000030090.4">
    <property type="protein sequence ID" value="ENSMUSP00000030090.4"/>
    <property type="gene ID" value="ENSMUSG00000028393.11"/>
</dbReference>
<dbReference type="Ensembl" id="ENSMUST00000107444.8">
    <property type="protein sequence ID" value="ENSMUSP00000103068.2"/>
    <property type="gene ID" value="ENSMUSG00000028393.11"/>
</dbReference>
<dbReference type="GeneID" id="17025"/>
<dbReference type="KEGG" id="mmu:17025"/>
<dbReference type="UCSC" id="uc008tez.2">
    <property type="organism name" value="mouse"/>
</dbReference>
<dbReference type="AGR" id="MGI:96853"/>
<dbReference type="CTD" id="210"/>
<dbReference type="MGI" id="MGI:96853">
    <property type="gene designation" value="Alad"/>
</dbReference>
<dbReference type="VEuPathDB" id="HostDB:ENSMUSG00000028393"/>
<dbReference type="eggNOG" id="KOG2794">
    <property type="taxonomic scope" value="Eukaryota"/>
</dbReference>
<dbReference type="GeneTree" id="ENSGT00390000006998"/>
<dbReference type="HOGENOM" id="CLU_035731_0_1_1"/>
<dbReference type="InParanoid" id="P10518"/>
<dbReference type="OMA" id="YQMDYAN"/>
<dbReference type="OrthoDB" id="1530at2759"/>
<dbReference type="PhylomeDB" id="P10518"/>
<dbReference type="TreeFam" id="TF300665"/>
<dbReference type="Reactome" id="R-MMU-189451">
    <property type="pathway name" value="Heme biosynthesis"/>
</dbReference>
<dbReference type="Reactome" id="R-MMU-6798695">
    <property type="pathway name" value="Neutrophil degranulation"/>
</dbReference>
<dbReference type="UniPathway" id="UPA00251">
    <property type="reaction ID" value="UER00318"/>
</dbReference>
<dbReference type="BioGRID-ORCS" id="17025">
    <property type="hits" value="5 hits in 81 CRISPR screens"/>
</dbReference>
<dbReference type="ChiTaRS" id="Alad">
    <property type="organism name" value="mouse"/>
</dbReference>
<dbReference type="EvolutionaryTrace" id="P10518"/>
<dbReference type="PRO" id="PR:P10518"/>
<dbReference type="Proteomes" id="UP000000589">
    <property type="component" value="Chromosome 4"/>
</dbReference>
<dbReference type="RNAct" id="P10518">
    <property type="molecule type" value="protein"/>
</dbReference>
<dbReference type="Bgee" id="ENSMUSG00000028393">
    <property type="expression patterns" value="Expressed in fetal liver hematopoietic progenitor cell and 256 other cell types or tissues"/>
</dbReference>
<dbReference type="GO" id="GO:0005829">
    <property type="term" value="C:cytosol"/>
    <property type="evidence" value="ECO:0000314"/>
    <property type="project" value="MGI"/>
</dbReference>
<dbReference type="GO" id="GO:0005615">
    <property type="term" value="C:extracellular space"/>
    <property type="evidence" value="ECO:0007669"/>
    <property type="project" value="Ensembl"/>
</dbReference>
<dbReference type="GO" id="GO:0042802">
    <property type="term" value="F:identical protein binding"/>
    <property type="evidence" value="ECO:0000353"/>
    <property type="project" value="MGI"/>
</dbReference>
<dbReference type="GO" id="GO:0004655">
    <property type="term" value="F:porphobilinogen synthase activity"/>
    <property type="evidence" value="ECO:0000314"/>
    <property type="project" value="MGI"/>
</dbReference>
<dbReference type="GO" id="GO:1904854">
    <property type="term" value="F:proteasome core complex binding"/>
    <property type="evidence" value="ECO:0007669"/>
    <property type="project" value="Ensembl"/>
</dbReference>
<dbReference type="GO" id="GO:0008270">
    <property type="term" value="F:zinc ion binding"/>
    <property type="evidence" value="ECO:0000250"/>
    <property type="project" value="UniProtKB"/>
</dbReference>
<dbReference type="GO" id="GO:0071353">
    <property type="term" value="P:cellular response to interleukin-4"/>
    <property type="evidence" value="ECO:0000314"/>
    <property type="project" value="MGI"/>
</dbReference>
<dbReference type="GO" id="GO:0071284">
    <property type="term" value="P:cellular response to lead ion"/>
    <property type="evidence" value="ECO:0007669"/>
    <property type="project" value="Ensembl"/>
</dbReference>
<dbReference type="GO" id="GO:0006784">
    <property type="term" value="P:heme A biosynthetic process"/>
    <property type="evidence" value="ECO:0000314"/>
    <property type="project" value="MGI"/>
</dbReference>
<dbReference type="GO" id="GO:0006785">
    <property type="term" value="P:heme B biosynthetic process"/>
    <property type="evidence" value="ECO:0000314"/>
    <property type="project" value="MGI"/>
</dbReference>
<dbReference type="GO" id="GO:0006783">
    <property type="term" value="P:heme biosynthetic process"/>
    <property type="evidence" value="ECO:0000314"/>
    <property type="project" value="MGI"/>
</dbReference>
<dbReference type="GO" id="GO:0048034">
    <property type="term" value="P:heme O biosynthetic process"/>
    <property type="evidence" value="ECO:0000314"/>
    <property type="project" value="MGI"/>
</dbReference>
<dbReference type="GO" id="GO:1901799">
    <property type="term" value="P:negative regulation of proteasomal protein catabolic process"/>
    <property type="evidence" value="ECO:0007669"/>
    <property type="project" value="Ensembl"/>
</dbReference>
<dbReference type="GO" id="GO:0051260">
    <property type="term" value="P:protein homooligomerization"/>
    <property type="evidence" value="ECO:0007669"/>
    <property type="project" value="Ensembl"/>
</dbReference>
<dbReference type="GO" id="GO:0006782">
    <property type="term" value="P:protoporphyrinogen IX biosynthetic process"/>
    <property type="evidence" value="ECO:0007669"/>
    <property type="project" value="UniProtKB-UniPathway"/>
</dbReference>
<dbReference type="GO" id="GO:0014823">
    <property type="term" value="P:response to activity"/>
    <property type="evidence" value="ECO:0007669"/>
    <property type="project" value="Ensembl"/>
</dbReference>
<dbReference type="GO" id="GO:0010044">
    <property type="term" value="P:response to aluminum ion"/>
    <property type="evidence" value="ECO:0007669"/>
    <property type="project" value="Ensembl"/>
</dbReference>
<dbReference type="GO" id="GO:0043200">
    <property type="term" value="P:response to amino acid"/>
    <property type="evidence" value="ECO:0007669"/>
    <property type="project" value="Ensembl"/>
</dbReference>
<dbReference type="GO" id="GO:0046685">
    <property type="term" value="P:response to arsenic-containing substance"/>
    <property type="evidence" value="ECO:0007669"/>
    <property type="project" value="Ensembl"/>
</dbReference>
<dbReference type="GO" id="GO:0046686">
    <property type="term" value="P:response to cadmium ion"/>
    <property type="evidence" value="ECO:0007669"/>
    <property type="project" value="Ensembl"/>
</dbReference>
<dbReference type="GO" id="GO:0032025">
    <property type="term" value="P:response to cobalt ion"/>
    <property type="evidence" value="ECO:0007669"/>
    <property type="project" value="Ensembl"/>
</dbReference>
<dbReference type="GO" id="GO:0045471">
    <property type="term" value="P:response to ethanol"/>
    <property type="evidence" value="ECO:0007669"/>
    <property type="project" value="Ensembl"/>
</dbReference>
<dbReference type="GO" id="GO:0070542">
    <property type="term" value="P:response to fatty acid"/>
    <property type="evidence" value="ECO:0007669"/>
    <property type="project" value="Ensembl"/>
</dbReference>
<dbReference type="GO" id="GO:0051384">
    <property type="term" value="P:response to glucocorticoid"/>
    <property type="evidence" value="ECO:0007669"/>
    <property type="project" value="Ensembl"/>
</dbReference>
<dbReference type="GO" id="GO:0009635">
    <property type="term" value="P:response to herbicide"/>
    <property type="evidence" value="ECO:0007669"/>
    <property type="project" value="Ensembl"/>
</dbReference>
<dbReference type="GO" id="GO:0001666">
    <property type="term" value="P:response to hypoxia"/>
    <property type="evidence" value="ECO:0007669"/>
    <property type="project" value="Ensembl"/>
</dbReference>
<dbReference type="GO" id="GO:0010212">
    <property type="term" value="P:response to ionizing radiation"/>
    <property type="evidence" value="ECO:0007669"/>
    <property type="project" value="Ensembl"/>
</dbReference>
<dbReference type="GO" id="GO:0010039">
    <property type="term" value="P:response to iron ion"/>
    <property type="evidence" value="ECO:0007669"/>
    <property type="project" value="Ensembl"/>
</dbReference>
<dbReference type="GO" id="GO:0032496">
    <property type="term" value="P:response to lipopolysaccharide"/>
    <property type="evidence" value="ECO:0007669"/>
    <property type="project" value="Ensembl"/>
</dbReference>
<dbReference type="GO" id="GO:0046689">
    <property type="term" value="P:response to mercury ion"/>
    <property type="evidence" value="ECO:0007669"/>
    <property type="project" value="Ensembl"/>
</dbReference>
<dbReference type="GO" id="GO:0051597">
    <property type="term" value="P:response to methylmercury"/>
    <property type="evidence" value="ECO:0007669"/>
    <property type="project" value="Ensembl"/>
</dbReference>
<dbReference type="GO" id="GO:0006979">
    <property type="term" value="P:response to oxidative stress"/>
    <property type="evidence" value="ECO:0007669"/>
    <property type="project" value="Ensembl"/>
</dbReference>
<dbReference type="GO" id="GO:0070541">
    <property type="term" value="P:response to platinum ion"/>
    <property type="evidence" value="ECO:0007669"/>
    <property type="project" value="Ensembl"/>
</dbReference>
<dbReference type="GO" id="GO:0010269">
    <property type="term" value="P:response to selenium ion"/>
    <property type="evidence" value="ECO:0007669"/>
    <property type="project" value="Ensembl"/>
</dbReference>
<dbReference type="GO" id="GO:0010266">
    <property type="term" value="P:response to vitamin B1"/>
    <property type="evidence" value="ECO:0007669"/>
    <property type="project" value="Ensembl"/>
</dbReference>
<dbReference type="GO" id="GO:0033197">
    <property type="term" value="P:response to vitamin E"/>
    <property type="evidence" value="ECO:0007669"/>
    <property type="project" value="Ensembl"/>
</dbReference>
<dbReference type="GO" id="GO:0009410">
    <property type="term" value="P:response to xenobiotic stimulus"/>
    <property type="evidence" value="ECO:0007669"/>
    <property type="project" value="Ensembl"/>
</dbReference>
<dbReference type="GO" id="GO:0010043">
    <property type="term" value="P:response to zinc ion"/>
    <property type="evidence" value="ECO:0007669"/>
    <property type="project" value="Ensembl"/>
</dbReference>
<dbReference type="CDD" id="cd04824">
    <property type="entry name" value="eu_ALAD_PBGS_cysteine_rich"/>
    <property type="match status" value="1"/>
</dbReference>
<dbReference type="FunFam" id="3.20.20.70:FF:000048">
    <property type="entry name" value="Delta-aminolevulinic acid dehydratase"/>
    <property type="match status" value="1"/>
</dbReference>
<dbReference type="Gene3D" id="3.20.20.70">
    <property type="entry name" value="Aldolase class I"/>
    <property type="match status" value="1"/>
</dbReference>
<dbReference type="InterPro" id="IPR001731">
    <property type="entry name" value="ALAD"/>
</dbReference>
<dbReference type="InterPro" id="IPR030656">
    <property type="entry name" value="ALAD_AS"/>
</dbReference>
<dbReference type="InterPro" id="IPR013785">
    <property type="entry name" value="Aldolase_TIM"/>
</dbReference>
<dbReference type="NCBIfam" id="NF006762">
    <property type="entry name" value="PRK09283.1"/>
    <property type="match status" value="1"/>
</dbReference>
<dbReference type="PANTHER" id="PTHR11458">
    <property type="entry name" value="DELTA-AMINOLEVULINIC ACID DEHYDRATASE"/>
    <property type="match status" value="1"/>
</dbReference>
<dbReference type="PANTHER" id="PTHR11458:SF0">
    <property type="entry name" value="DELTA-AMINOLEVULINIC ACID DEHYDRATASE"/>
    <property type="match status" value="1"/>
</dbReference>
<dbReference type="Pfam" id="PF00490">
    <property type="entry name" value="ALAD"/>
    <property type="match status" value="1"/>
</dbReference>
<dbReference type="PIRSF" id="PIRSF001415">
    <property type="entry name" value="Porphbilin_synth"/>
    <property type="match status" value="1"/>
</dbReference>
<dbReference type="PRINTS" id="PR00144">
    <property type="entry name" value="DALDHYDRTASE"/>
</dbReference>
<dbReference type="SMART" id="SM01004">
    <property type="entry name" value="ALAD"/>
    <property type="match status" value="1"/>
</dbReference>
<dbReference type="SUPFAM" id="SSF51569">
    <property type="entry name" value="Aldolase"/>
    <property type="match status" value="1"/>
</dbReference>
<dbReference type="PROSITE" id="PS00169">
    <property type="entry name" value="D_ALA_DEHYDRATASE"/>
    <property type="match status" value="1"/>
</dbReference>
<organism>
    <name type="scientific">Mus musculus</name>
    <name type="common">Mouse</name>
    <dbReference type="NCBI Taxonomy" id="10090"/>
    <lineage>
        <taxon>Eukaryota</taxon>
        <taxon>Metazoa</taxon>
        <taxon>Chordata</taxon>
        <taxon>Craniata</taxon>
        <taxon>Vertebrata</taxon>
        <taxon>Euteleostomi</taxon>
        <taxon>Mammalia</taxon>
        <taxon>Eutheria</taxon>
        <taxon>Euarchontoglires</taxon>
        <taxon>Glires</taxon>
        <taxon>Rodentia</taxon>
        <taxon>Myomorpha</taxon>
        <taxon>Muroidea</taxon>
        <taxon>Muridae</taxon>
        <taxon>Murinae</taxon>
        <taxon>Mus</taxon>
        <taxon>Mus</taxon>
    </lineage>
</organism>
<gene>
    <name type="primary">Alad</name>
    <name type="synonym">Lv</name>
</gene>